<proteinExistence type="inferred from homology"/>
<comment type="function">
    <text evidence="1">Located at the top of the head of the 30S subunit, it contacts several helices of the 16S rRNA. In the 70S ribosome it contacts the 23S rRNA (bridge B1a) and protein L5 of the 50S subunit (bridge B1b), connecting the 2 subunits; these bridges are implicated in subunit movement. Contacts the tRNAs in the A and P-sites.</text>
</comment>
<comment type="subunit">
    <text evidence="1">Part of the 30S ribosomal subunit. Forms a loose heterodimer with protein S19. Forms two bridges to the 50S subunit in the 70S ribosome.</text>
</comment>
<comment type="similarity">
    <text evidence="1">Belongs to the universal ribosomal protein uS13 family.</text>
</comment>
<feature type="chain" id="PRO_0000132106" description="Small ribosomal subunit protein uS13">
    <location>
        <begin position="1"/>
        <end position="124"/>
    </location>
</feature>
<feature type="region of interest" description="Disordered" evidence="2">
    <location>
        <begin position="94"/>
        <end position="124"/>
    </location>
</feature>
<feature type="sequence conflict" description="In Ref. 1; AAB17598." evidence="3" ref="1">
    <original>A</original>
    <variation>D</variation>
    <location>
        <position position="2"/>
    </location>
</feature>
<feature type="sequence conflict" description="In Ref. 1; AAB17598." evidence="3" ref="1">
    <original>D</original>
    <variation>H</variation>
    <location>
        <position position="12"/>
    </location>
</feature>
<feature type="sequence conflict" description="In Ref. 1; AAB17598." evidence="3" ref="1">
    <original>RTIAGKKKAR</original>
    <variation>AHHRRQEEG</variation>
    <location>
        <begin position="115"/>
        <end position="124"/>
    </location>
</feature>
<protein>
    <recommendedName>
        <fullName evidence="1">Small ribosomal subunit protein uS13</fullName>
    </recommendedName>
    <alternativeName>
        <fullName evidence="3">30S ribosomal protein S13</fullName>
    </alternativeName>
</protein>
<keyword id="KW-1185">Reference proteome</keyword>
<keyword id="KW-0687">Ribonucleoprotein</keyword>
<keyword id="KW-0689">Ribosomal protein</keyword>
<keyword id="KW-0694">RNA-binding</keyword>
<keyword id="KW-0699">rRNA-binding</keyword>
<keyword id="KW-0820">tRNA-binding</keyword>
<dbReference type="EMBL" id="U15140">
    <property type="protein sequence ID" value="AAB17598.1"/>
    <property type="molecule type" value="Genomic_DNA"/>
</dbReference>
<dbReference type="EMBL" id="LT708304">
    <property type="protein sequence ID" value="SIU02117.1"/>
    <property type="molecule type" value="Genomic_DNA"/>
</dbReference>
<dbReference type="RefSeq" id="NP_857129.1">
    <property type="nucleotide sequence ID" value="NC_002945.3"/>
</dbReference>
<dbReference type="RefSeq" id="WP_003418360.1">
    <property type="nucleotide sequence ID" value="NC_002945.4"/>
</dbReference>
<dbReference type="SMR" id="P45813"/>
<dbReference type="GeneID" id="45427449"/>
<dbReference type="KEGG" id="mbo:BQ2027_MB3489C"/>
<dbReference type="PATRIC" id="fig|233413.5.peg.3826"/>
<dbReference type="Proteomes" id="UP000001419">
    <property type="component" value="Chromosome"/>
</dbReference>
<dbReference type="GO" id="GO:0005829">
    <property type="term" value="C:cytosol"/>
    <property type="evidence" value="ECO:0007669"/>
    <property type="project" value="TreeGrafter"/>
</dbReference>
<dbReference type="GO" id="GO:0015935">
    <property type="term" value="C:small ribosomal subunit"/>
    <property type="evidence" value="ECO:0007669"/>
    <property type="project" value="TreeGrafter"/>
</dbReference>
<dbReference type="GO" id="GO:0019843">
    <property type="term" value="F:rRNA binding"/>
    <property type="evidence" value="ECO:0007669"/>
    <property type="project" value="UniProtKB-UniRule"/>
</dbReference>
<dbReference type="GO" id="GO:0003735">
    <property type="term" value="F:structural constituent of ribosome"/>
    <property type="evidence" value="ECO:0007669"/>
    <property type="project" value="InterPro"/>
</dbReference>
<dbReference type="GO" id="GO:0000049">
    <property type="term" value="F:tRNA binding"/>
    <property type="evidence" value="ECO:0007669"/>
    <property type="project" value="UniProtKB-UniRule"/>
</dbReference>
<dbReference type="GO" id="GO:0006412">
    <property type="term" value="P:translation"/>
    <property type="evidence" value="ECO:0007669"/>
    <property type="project" value="UniProtKB-UniRule"/>
</dbReference>
<dbReference type="FunFam" id="1.10.8.50:FF:000001">
    <property type="entry name" value="30S ribosomal protein S13"/>
    <property type="match status" value="1"/>
</dbReference>
<dbReference type="FunFam" id="4.10.910.10:FF:000001">
    <property type="entry name" value="30S ribosomal protein S13"/>
    <property type="match status" value="1"/>
</dbReference>
<dbReference type="Gene3D" id="1.10.8.50">
    <property type="match status" value="1"/>
</dbReference>
<dbReference type="Gene3D" id="4.10.910.10">
    <property type="entry name" value="30s ribosomal protein s13, domain 2"/>
    <property type="match status" value="1"/>
</dbReference>
<dbReference type="HAMAP" id="MF_01315">
    <property type="entry name" value="Ribosomal_uS13"/>
    <property type="match status" value="1"/>
</dbReference>
<dbReference type="InterPro" id="IPR027437">
    <property type="entry name" value="Rbsml_uS13_C"/>
</dbReference>
<dbReference type="InterPro" id="IPR001892">
    <property type="entry name" value="Ribosomal_uS13"/>
</dbReference>
<dbReference type="InterPro" id="IPR010979">
    <property type="entry name" value="Ribosomal_uS13-like_H2TH"/>
</dbReference>
<dbReference type="InterPro" id="IPR019980">
    <property type="entry name" value="Ribosomal_uS13_bac-type"/>
</dbReference>
<dbReference type="InterPro" id="IPR018269">
    <property type="entry name" value="Ribosomal_uS13_CS"/>
</dbReference>
<dbReference type="NCBIfam" id="TIGR03631">
    <property type="entry name" value="uS13_bact"/>
    <property type="match status" value="1"/>
</dbReference>
<dbReference type="PANTHER" id="PTHR10871">
    <property type="entry name" value="30S RIBOSOMAL PROTEIN S13/40S RIBOSOMAL PROTEIN S18"/>
    <property type="match status" value="1"/>
</dbReference>
<dbReference type="PANTHER" id="PTHR10871:SF1">
    <property type="entry name" value="SMALL RIBOSOMAL SUBUNIT PROTEIN US13M"/>
    <property type="match status" value="1"/>
</dbReference>
<dbReference type="Pfam" id="PF00416">
    <property type="entry name" value="Ribosomal_S13"/>
    <property type="match status" value="1"/>
</dbReference>
<dbReference type="PIRSF" id="PIRSF002134">
    <property type="entry name" value="Ribosomal_S13"/>
    <property type="match status" value="1"/>
</dbReference>
<dbReference type="SUPFAM" id="SSF46946">
    <property type="entry name" value="S13-like H2TH domain"/>
    <property type="match status" value="1"/>
</dbReference>
<dbReference type="PROSITE" id="PS00646">
    <property type="entry name" value="RIBOSOMAL_S13_1"/>
    <property type="match status" value="1"/>
</dbReference>
<dbReference type="PROSITE" id="PS50159">
    <property type="entry name" value="RIBOSOMAL_S13_2"/>
    <property type="match status" value="1"/>
</dbReference>
<sequence length="124" mass="14351">MARLVGVDLPRDKRMEVALTYIFGIGRTRSNEILAATGIDRDLRTRDLTEEQLIHLRDYIEANLKVEGDLRREVQADIRRKIEIGCYQGLRHRRGMPVRGQRTKTNARTRKGPKRTIAGKKKAR</sequence>
<organism>
    <name type="scientific">Mycobacterium bovis (strain ATCC BAA-935 / AF2122/97)</name>
    <dbReference type="NCBI Taxonomy" id="233413"/>
    <lineage>
        <taxon>Bacteria</taxon>
        <taxon>Bacillati</taxon>
        <taxon>Actinomycetota</taxon>
        <taxon>Actinomycetes</taxon>
        <taxon>Mycobacteriales</taxon>
        <taxon>Mycobacteriaceae</taxon>
        <taxon>Mycobacterium</taxon>
        <taxon>Mycobacterium tuberculosis complex</taxon>
    </lineage>
</organism>
<evidence type="ECO:0000255" key="1">
    <source>
        <dbReference type="HAMAP-Rule" id="MF_01315"/>
    </source>
</evidence>
<evidence type="ECO:0000256" key="2">
    <source>
        <dbReference type="SAM" id="MobiDB-lite"/>
    </source>
</evidence>
<evidence type="ECO:0000305" key="3"/>
<name>RS13_MYCBO</name>
<gene>
    <name evidence="1" type="primary">rpsM</name>
    <name type="ordered locus">BQ2027_MB3489C</name>
</gene>
<reference key="1">
    <citation type="journal article" date="1996" name="Gene">
        <title>Overproduction of mycobacterial ribosomal protein S13 induces catalase/peroxidase activity and hypersensitivity to isoniazid in Mycobacterium smegmatis.</title>
        <authorList>
            <person name="Dubnau E."/>
            <person name="Soares S."/>
            <person name="Huang T.J."/>
            <person name="Jacobs W.R. Jr."/>
        </authorList>
    </citation>
    <scope>NUCLEOTIDE SEQUENCE [GENOMIC DNA]</scope>
    <source>
        <strain>BCG</strain>
    </source>
</reference>
<reference key="2">
    <citation type="journal article" date="2003" name="Proc. Natl. Acad. Sci. U.S.A.">
        <title>The complete genome sequence of Mycobacterium bovis.</title>
        <authorList>
            <person name="Garnier T."/>
            <person name="Eiglmeier K."/>
            <person name="Camus J.-C."/>
            <person name="Medina N."/>
            <person name="Mansoor H."/>
            <person name="Pryor M."/>
            <person name="Duthoy S."/>
            <person name="Grondin S."/>
            <person name="Lacroix C."/>
            <person name="Monsempe C."/>
            <person name="Simon S."/>
            <person name="Harris B."/>
            <person name="Atkin R."/>
            <person name="Doggett J."/>
            <person name="Mayes R."/>
            <person name="Keating L."/>
            <person name="Wheeler P.R."/>
            <person name="Parkhill J."/>
            <person name="Barrell B.G."/>
            <person name="Cole S.T."/>
            <person name="Gordon S.V."/>
            <person name="Hewinson R.G."/>
        </authorList>
    </citation>
    <scope>NUCLEOTIDE SEQUENCE [LARGE SCALE GENOMIC DNA]</scope>
    <source>
        <strain>ATCC BAA-935 / AF2122/97</strain>
    </source>
</reference>
<reference key="3">
    <citation type="journal article" date="2017" name="Genome Announc.">
        <title>Updated reference genome sequence and annotation of Mycobacterium bovis AF2122/97.</title>
        <authorList>
            <person name="Malone K.M."/>
            <person name="Farrell D."/>
            <person name="Stuber T.P."/>
            <person name="Schubert O.T."/>
            <person name="Aebersold R."/>
            <person name="Robbe-Austerman S."/>
            <person name="Gordon S.V."/>
        </authorList>
    </citation>
    <scope>NUCLEOTIDE SEQUENCE [LARGE SCALE GENOMIC DNA]</scope>
    <scope>GENOME REANNOTATION</scope>
    <source>
        <strain>ATCC BAA-935 / AF2122/97</strain>
    </source>
</reference>
<accession>P45813</accession>
<accession>A0A1R3Y476</accession>
<accession>X2BP39</accession>